<comment type="function">
    <text evidence="1">Nucleoside triphosphate pyrophosphatase that hydrolyzes dTTP and UTP. May have a dual role in cell division arrest and in preventing the incorporation of modified nucleotides into cellular nucleic acids.</text>
</comment>
<comment type="catalytic activity">
    <reaction evidence="1">
        <text>dTTP + H2O = dTMP + diphosphate + H(+)</text>
        <dbReference type="Rhea" id="RHEA:28534"/>
        <dbReference type="ChEBI" id="CHEBI:15377"/>
        <dbReference type="ChEBI" id="CHEBI:15378"/>
        <dbReference type="ChEBI" id="CHEBI:33019"/>
        <dbReference type="ChEBI" id="CHEBI:37568"/>
        <dbReference type="ChEBI" id="CHEBI:63528"/>
        <dbReference type="EC" id="3.6.1.9"/>
    </reaction>
</comment>
<comment type="catalytic activity">
    <reaction evidence="1">
        <text>UTP + H2O = UMP + diphosphate + H(+)</text>
        <dbReference type="Rhea" id="RHEA:29395"/>
        <dbReference type="ChEBI" id="CHEBI:15377"/>
        <dbReference type="ChEBI" id="CHEBI:15378"/>
        <dbReference type="ChEBI" id="CHEBI:33019"/>
        <dbReference type="ChEBI" id="CHEBI:46398"/>
        <dbReference type="ChEBI" id="CHEBI:57865"/>
        <dbReference type="EC" id="3.6.1.9"/>
    </reaction>
</comment>
<comment type="cofactor">
    <cofactor evidence="1">
        <name>a divalent metal cation</name>
        <dbReference type="ChEBI" id="CHEBI:60240"/>
    </cofactor>
</comment>
<comment type="subcellular location">
    <subcellularLocation>
        <location evidence="1">Cytoplasm</location>
    </subcellularLocation>
</comment>
<comment type="similarity">
    <text evidence="1">Belongs to the Maf family. YhdE subfamily.</text>
</comment>
<dbReference type="EC" id="3.6.1.9" evidence="1"/>
<dbReference type="EMBL" id="CP000139">
    <property type="protein sequence ID" value="ABR40155.1"/>
    <property type="molecule type" value="Genomic_DNA"/>
</dbReference>
<dbReference type="RefSeq" id="WP_005847433.1">
    <property type="nucleotide sequence ID" value="NZ_JANSWM010000062.1"/>
</dbReference>
<dbReference type="SMR" id="A6L391"/>
<dbReference type="STRING" id="435590.BVU_2498"/>
<dbReference type="PaxDb" id="435590-BVU_2498"/>
<dbReference type="GeneID" id="5303462"/>
<dbReference type="KEGG" id="bvu:BVU_2498"/>
<dbReference type="eggNOG" id="COG0424">
    <property type="taxonomic scope" value="Bacteria"/>
</dbReference>
<dbReference type="HOGENOM" id="CLU_040416_0_0_10"/>
<dbReference type="BioCyc" id="BVUL435590:G1G59-2601-MONOMER"/>
<dbReference type="Proteomes" id="UP000002861">
    <property type="component" value="Chromosome"/>
</dbReference>
<dbReference type="GO" id="GO:0005737">
    <property type="term" value="C:cytoplasm"/>
    <property type="evidence" value="ECO:0007669"/>
    <property type="project" value="UniProtKB-SubCell"/>
</dbReference>
<dbReference type="GO" id="GO:0036218">
    <property type="term" value="F:dTTP diphosphatase activity"/>
    <property type="evidence" value="ECO:0007669"/>
    <property type="project" value="RHEA"/>
</dbReference>
<dbReference type="GO" id="GO:0036221">
    <property type="term" value="F:UTP diphosphatase activity"/>
    <property type="evidence" value="ECO:0007669"/>
    <property type="project" value="RHEA"/>
</dbReference>
<dbReference type="GO" id="GO:0009117">
    <property type="term" value="P:nucleotide metabolic process"/>
    <property type="evidence" value="ECO:0007669"/>
    <property type="project" value="UniProtKB-KW"/>
</dbReference>
<dbReference type="CDD" id="cd00555">
    <property type="entry name" value="Maf"/>
    <property type="match status" value="1"/>
</dbReference>
<dbReference type="FunFam" id="3.90.950.10:FF:000005">
    <property type="entry name" value="7-methyl-GTP pyrophosphatase"/>
    <property type="match status" value="1"/>
</dbReference>
<dbReference type="Gene3D" id="3.90.950.10">
    <property type="match status" value="1"/>
</dbReference>
<dbReference type="HAMAP" id="MF_00528">
    <property type="entry name" value="Maf"/>
    <property type="match status" value="1"/>
</dbReference>
<dbReference type="InterPro" id="IPR029001">
    <property type="entry name" value="ITPase-like_fam"/>
</dbReference>
<dbReference type="InterPro" id="IPR003697">
    <property type="entry name" value="Maf-like"/>
</dbReference>
<dbReference type="NCBIfam" id="TIGR00172">
    <property type="entry name" value="maf"/>
    <property type="match status" value="1"/>
</dbReference>
<dbReference type="PANTHER" id="PTHR43213">
    <property type="entry name" value="BIFUNCTIONAL DTTP/UTP PYROPHOSPHATASE/METHYLTRANSFERASE PROTEIN-RELATED"/>
    <property type="match status" value="1"/>
</dbReference>
<dbReference type="PANTHER" id="PTHR43213:SF5">
    <property type="entry name" value="BIFUNCTIONAL DTTP_UTP PYROPHOSPHATASE_METHYLTRANSFERASE PROTEIN-RELATED"/>
    <property type="match status" value="1"/>
</dbReference>
<dbReference type="Pfam" id="PF02545">
    <property type="entry name" value="Maf"/>
    <property type="match status" value="1"/>
</dbReference>
<dbReference type="PIRSF" id="PIRSF006305">
    <property type="entry name" value="Maf"/>
    <property type="match status" value="1"/>
</dbReference>
<dbReference type="SUPFAM" id="SSF52972">
    <property type="entry name" value="ITPase-like"/>
    <property type="match status" value="1"/>
</dbReference>
<proteinExistence type="inferred from homology"/>
<protein>
    <recommendedName>
        <fullName evidence="1">dTTP/UTP pyrophosphatase</fullName>
        <shortName evidence="1">dTTPase/UTPase</shortName>
        <ecNumber evidence="1">3.6.1.9</ecNumber>
    </recommendedName>
    <alternativeName>
        <fullName evidence="1">Nucleoside triphosphate pyrophosphatase</fullName>
    </alternativeName>
    <alternativeName>
        <fullName evidence="1">Nucleotide pyrophosphatase</fullName>
        <shortName evidence="1">Nucleotide PPase</shortName>
    </alternativeName>
</protein>
<accession>A6L391</accession>
<organism>
    <name type="scientific">Phocaeicola vulgatus (strain ATCC 8482 / DSM 1447 / JCM 5826 / CCUG 4940 / NBRC 14291 / NCTC 11154)</name>
    <name type="common">Bacteroides vulgatus</name>
    <dbReference type="NCBI Taxonomy" id="435590"/>
    <lineage>
        <taxon>Bacteria</taxon>
        <taxon>Pseudomonadati</taxon>
        <taxon>Bacteroidota</taxon>
        <taxon>Bacteroidia</taxon>
        <taxon>Bacteroidales</taxon>
        <taxon>Bacteroidaceae</taxon>
        <taxon>Phocaeicola</taxon>
    </lineage>
</organism>
<name>NTPPA_PHOV8</name>
<gene>
    <name type="ordered locus">BVU_2498</name>
</gene>
<keyword id="KW-0963">Cytoplasm</keyword>
<keyword id="KW-0378">Hydrolase</keyword>
<keyword id="KW-0546">Nucleotide metabolism</keyword>
<sequence length="193" mass="21771">MLENLEKYKIILASNSPRRKELLSGLGIKYEVKTLPGIEETYPDTLKAEEIPLYIACEKAAAYRNTMHPDELIITADTIVWLDGVVMGKPHNEDDARQMLWKLSGKTHQVITGVCLTTVGAQRSFSAVTEVTFAELSDEEIDYYIRVYKPMDKAGSYGIQEWIGFIGVRGISGSYFNVMGLPVQRLYTELKKL</sequence>
<evidence type="ECO:0000255" key="1">
    <source>
        <dbReference type="HAMAP-Rule" id="MF_00528"/>
    </source>
</evidence>
<reference key="1">
    <citation type="journal article" date="2007" name="PLoS Biol.">
        <title>Evolution of symbiotic bacteria in the distal human intestine.</title>
        <authorList>
            <person name="Xu J."/>
            <person name="Mahowald M.A."/>
            <person name="Ley R.E."/>
            <person name="Lozupone C.A."/>
            <person name="Hamady M."/>
            <person name="Martens E.C."/>
            <person name="Henrissat B."/>
            <person name="Coutinho P.M."/>
            <person name="Minx P."/>
            <person name="Latreille P."/>
            <person name="Cordum H."/>
            <person name="Van Brunt A."/>
            <person name="Kim K."/>
            <person name="Fulton R.S."/>
            <person name="Fulton L.A."/>
            <person name="Clifton S.W."/>
            <person name="Wilson R.K."/>
            <person name="Knight R.D."/>
            <person name="Gordon J.I."/>
        </authorList>
    </citation>
    <scope>NUCLEOTIDE SEQUENCE [LARGE SCALE GENOMIC DNA]</scope>
    <source>
        <strain>ATCC 8482 / DSM 1447 / JCM 5826 / CCUG 4940 / NBRC 14291 / NCTC 11154</strain>
    </source>
</reference>
<feature type="chain" id="PRO_1000060933" description="dTTP/UTP pyrophosphatase">
    <location>
        <begin position="1"/>
        <end position="193"/>
    </location>
</feature>
<feature type="active site" description="Proton acceptor" evidence="1">
    <location>
        <position position="77"/>
    </location>
</feature>
<feature type="site" description="Important for substrate specificity" evidence="1">
    <location>
        <position position="18"/>
    </location>
</feature>
<feature type="site" description="Important for substrate specificity" evidence="1">
    <location>
        <position position="78"/>
    </location>
</feature>
<feature type="site" description="Important for substrate specificity" evidence="1">
    <location>
        <position position="160"/>
    </location>
</feature>